<protein>
    <recommendedName>
        <fullName evidence="1">tRNA(Ile)-lysidine synthase</fullName>
        <ecNumber evidence="1">6.3.4.19</ecNumber>
    </recommendedName>
    <alternativeName>
        <fullName evidence="1">tRNA(Ile)-2-lysyl-cytidine synthase</fullName>
    </alternativeName>
    <alternativeName>
        <fullName evidence="1">tRNA(Ile)-lysidine synthetase</fullName>
    </alternativeName>
</protein>
<name>TILS_ENTFA</name>
<comment type="function">
    <text evidence="1">Ligates lysine onto the cytidine present at position 34 of the AUA codon-specific tRNA(Ile) that contains the anticodon CAU, in an ATP-dependent manner. Cytidine is converted to lysidine, thus changing the amino acid specificity of the tRNA from methionine to isoleucine.</text>
</comment>
<comment type="catalytic activity">
    <reaction evidence="1">
        <text>cytidine(34) in tRNA(Ile2) + L-lysine + ATP = lysidine(34) in tRNA(Ile2) + AMP + diphosphate + H(+)</text>
        <dbReference type="Rhea" id="RHEA:43744"/>
        <dbReference type="Rhea" id="RHEA-COMP:10625"/>
        <dbReference type="Rhea" id="RHEA-COMP:10670"/>
        <dbReference type="ChEBI" id="CHEBI:15378"/>
        <dbReference type="ChEBI" id="CHEBI:30616"/>
        <dbReference type="ChEBI" id="CHEBI:32551"/>
        <dbReference type="ChEBI" id="CHEBI:33019"/>
        <dbReference type="ChEBI" id="CHEBI:82748"/>
        <dbReference type="ChEBI" id="CHEBI:83665"/>
        <dbReference type="ChEBI" id="CHEBI:456215"/>
        <dbReference type="EC" id="6.3.4.19"/>
    </reaction>
</comment>
<comment type="subcellular location">
    <subcellularLocation>
        <location evidence="1">Cytoplasm</location>
    </subcellularLocation>
</comment>
<comment type="domain">
    <text>The N-terminal region contains the highly conserved SGGXDS motif, predicted to be a P-loop motif involved in ATP binding.</text>
</comment>
<comment type="similarity">
    <text evidence="1">Belongs to the tRNA(Ile)-lysidine synthase family.</text>
</comment>
<feature type="chain" id="PRO_0000181692" description="tRNA(Ile)-lysidine synthase">
    <location>
        <begin position="1"/>
        <end position="462"/>
    </location>
</feature>
<feature type="binding site" evidence="1">
    <location>
        <begin position="26"/>
        <end position="31"/>
    </location>
    <ligand>
        <name>ATP</name>
        <dbReference type="ChEBI" id="CHEBI:30616"/>
    </ligand>
</feature>
<sequence length="462" mass="54120">MFWQFYKRGKEQGFWQPHQTIVVAVSGGVDSMALLTLMEQVAEKEQLQLVVAHVNHQLREASAQEAQYLATYCQQRELTYYETRWEDPEKQRNLEAKARTFRYEFFKEVMEIEGAAVLMTAHHLDDQAETILMKLIRGTNFSHSAGIKERRPFATGELIRPLLIYPKEELYQFAQRQAFVYFEDETNQTNEYLRNRLRNQVLPLLKQENPQFLDQIASFSNEQRFAQEFIQEQIEPQLSEAVEPTKQGWRIPLKRLLKETPAYQHFFLTAFFQKTLVPLGVSLNQRQMTQILKVLNDERQPQGSVMLEQQWQLAKSYDWLCLEQKQAALREEVTHLLVPGAGIYLSETEWLGLIATDKPFPLPEEINQWTGQLLAIPLTTATPLTVRHRQSGDRITLKPGFTKKLSRVFIDQKVPNEARESAWVITDEQEEIIWVPKFANSYLSIPLETDKIHYRLLFKTKE</sequence>
<evidence type="ECO:0000255" key="1">
    <source>
        <dbReference type="HAMAP-Rule" id="MF_01161"/>
    </source>
</evidence>
<keyword id="KW-0067">ATP-binding</keyword>
<keyword id="KW-0963">Cytoplasm</keyword>
<keyword id="KW-0436">Ligase</keyword>
<keyword id="KW-0547">Nucleotide-binding</keyword>
<keyword id="KW-1185">Reference proteome</keyword>
<keyword id="KW-0819">tRNA processing</keyword>
<proteinExistence type="inferred from homology"/>
<organism>
    <name type="scientific">Enterococcus faecalis (strain ATCC 700802 / V583)</name>
    <dbReference type="NCBI Taxonomy" id="226185"/>
    <lineage>
        <taxon>Bacteria</taxon>
        <taxon>Bacillati</taxon>
        <taxon>Bacillota</taxon>
        <taxon>Bacilli</taxon>
        <taxon>Lactobacillales</taxon>
        <taxon>Enterococcaceae</taxon>
        <taxon>Enterococcus</taxon>
    </lineage>
</organism>
<accession>Q839B3</accession>
<reference key="1">
    <citation type="journal article" date="2003" name="Science">
        <title>Role of mobile DNA in the evolution of vancomycin-resistant Enterococcus faecalis.</title>
        <authorList>
            <person name="Paulsen I.T."/>
            <person name="Banerjei L."/>
            <person name="Myers G.S.A."/>
            <person name="Nelson K.E."/>
            <person name="Seshadri R."/>
            <person name="Read T.D."/>
            <person name="Fouts D.E."/>
            <person name="Eisen J.A."/>
            <person name="Gill S.R."/>
            <person name="Heidelberg J.F."/>
            <person name="Tettelin H."/>
            <person name="Dodson R.J."/>
            <person name="Umayam L.A."/>
            <person name="Brinkac L.M."/>
            <person name="Beanan M.J."/>
            <person name="Daugherty S.C."/>
            <person name="DeBoy R.T."/>
            <person name="Durkin S.A."/>
            <person name="Kolonay J.F."/>
            <person name="Madupu R."/>
            <person name="Nelson W.C."/>
            <person name="Vamathevan J.J."/>
            <person name="Tran B."/>
            <person name="Upton J."/>
            <person name="Hansen T."/>
            <person name="Shetty J."/>
            <person name="Khouri H.M."/>
            <person name="Utterback T.R."/>
            <person name="Radune D."/>
            <person name="Ketchum K.A."/>
            <person name="Dougherty B.A."/>
            <person name="Fraser C.M."/>
        </authorList>
    </citation>
    <scope>NUCLEOTIDE SEQUENCE [LARGE SCALE GENOMIC DNA]</scope>
    <source>
        <strain>ATCC 700802 / V583</strain>
    </source>
</reference>
<gene>
    <name evidence="1" type="primary">tilS</name>
    <name type="ordered locus">EF_0263</name>
</gene>
<dbReference type="EC" id="6.3.4.19" evidence="1"/>
<dbReference type="EMBL" id="AE016830">
    <property type="protein sequence ID" value="AAO80128.1"/>
    <property type="molecule type" value="Genomic_DNA"/>
</dbReference>
<dbReference type="RefSeq" id="NP_814057.1">
    <property type="nucleotide sequence ID" value="NC_004668.1"/>
</dbReference>
<dbReference type="RefSeq" id="WP_002379219.1">
    <property type="nucleotide sequence ID" value="NZ_KE136524.1"/>
</dbReference>
<dbReference type="SMR" id="Q839B3"/>
<dbReference type="STRING" id="226185.EF_0263"/>
<dbReference type="EnsemblBacteria" id="AAO80128">
    <property type="protein sequence ID" value="AAO80128"/>
    <property type="gene ID" value="EF_0263"/>
</dbReference>
<dbReference type="KEGG" id="efa:EF0263"/>
<dbReference type="PATRIC" id="fig|226185.45.peg.6"/>
<dbReference type="eggNOG" id="COG0037">
    <property type="taxonomic scope" value="Bacteria"/>
</dbReference>
<dbReference type="HOGENOM" id="CLU_018869_0_2_9"/>
<dbReference type="Proteomes" id="UP000001415">
    <property type="component" value="Chromosome"/>
</dbReference>
<dbReference type="GO" id="GO:0005737">
    <property type="term" value="C:cytoplasm"/>
    <property type="evidence" value="ECO:0007669"/>
    <property type="project" value="UniProtKB-SubCell"/>
</dbReference>
<dbReference type="GO" id="GO:0005524">
    <property type="term" value="F:ATP binding"/>
    <property type="evidence" value="ECO:0007669"/>
    <property type="project" value="UniProtKB-UniRule"/>
</dbReference>
<dbReference type="GO" id="GO:0032267">
    <property type="term" value="F:tRNA(Ile)-lysidine synthase activity"/>
    <property type="evidence" value="ECO:0007669"/>
    <property type="project" value="UniProtKB-EC"/>
</dbReference>
<dbReference type="GO" id="GO:0006400">
    <property type="term" value="P:tRNA modification"/>
    <property type="evidence" value="ECO:0007669"/>
    <property type="project" value="UniProtKB-UniRule"/>
</dbReference>
<dbReference type="CDD" id="cd01992">
    <property type="entry name" value="TilS_N"/>
    <property type="match status" value="1"/>
</dbReference>
<dbReference type="Gene3D" id="3.40.50.620">
    <property type="entry name" value="HUPs"/>
    <property type="match status" value="1"/>
</dbReference>
<dbReference type="HAMAP" id="MF_01161">
    <property type="entry name" value="tRNA_Ile_lys_synt"/>
    <property type="match status" value="1"/>
</dbReference>
<dbReference type="InterPro" id="IPR012796">
    <property type="entry name" value="Lysidine-tRNA-synth_C"/>
</dbReference>
<dbReference type="InterPro" id="IPR014729">
    <property type="entry name" value="Rossmann-like_a/b/a_fold"/>
</dbReference>
<dbReference type="InterPro" id="IPR011063">
    <property type="entry name" value="TilS/TtcA_N"/>
</dbReference>
<dbReference type="InterPro" id="IPR012094">
    <property type="entry name" value="tRNA_Ile_lys_synt"/>
</dbReference>
<dbReference type="InterPro" id="IPR012795">
    <property type="entry name" value="tRNA_Ile_lys_synt_N"/>
</dbReference>
<dbReference type="NCBIfam" id="TIGR02433">
    <property type="entry name" value="lysidine_TilS_C"/>
    <property type="match status" value="1"/>
</dbReference>
<dbReference type="NCBIfam" id="TIGR02432">
    <property type="entry name" value="lysidine_TilS_N"/>
    <property type="match status" value="1"/>
</dbReference>
<dbReference type="PANTHER" id="PTHR43033">
    <property type="entry name" value="TRNA(ILE)-LYSIDINE SYNTHASE-RELATED"/>
    <property type="match status" value="1"/>
</dbReference>
<dbReference type="PANTHER" id="PTHR43033:SF1">
    <property type="entry name" value="TRNA(ILE)-LYSIDINE SYNTHASE-RELATED"/>
    <property type="match status" value="1"/>
</dbReference>
<dbReference type="Pfam" id="PF01171">
    <property type="entry name" value="ATP_bind_3"/>
    <property type="match status" value="1"/>
</dbReference>
<dbReference type="Pfam" id="PF11734">
    <property type="entry name" value="TilS_C"/>
    <property type="match status" value="1"/>
</dbReference>
<dbReference type="SMART" id="SM00977">
    <property type="entry name" value="TilS_C"/>
    <property type="match status" value="1"/>
</dbReference>
<dbReference type="SUPFAM" id="SSF52402">
    <property type="entry name" value="Adenine nucleotide alpha hydrolases-like"/>
    <property type="match status" value="1"/>
</dbReference>
<dbReference type="SUPFAM" id="SSF56037">
    <property type="entry name" value="PheT/TilS domain"/>
    <property type="match status" value="1"/>
</dbReference>